<keyword id="KW-0325">Glycoprotein</keyword>
<keyword id="KW-0472">Membrane</keyword>
<keyword id="KW-0732">Signal</keyword>
<keyword id="KW-0812">Transmembrane</keyword>
<keyword id="KW-1133">Transmembrane helix</keyword>
<keyword id="KW-0261">Viral envelope protein</keyword>
<keyword id="KW-0946">Virion</keyword>
<gene>
    <name type="primary">gG</name>
    <name type="ordered locus">70</name>
</gene>
<dbReference type="EMBL" id="M87497">
    <property type="protein sequence ID" value="AAA46071.2"/>
    <property type="molecule type" value="Genomic_DNA"/>
</dbReference>
<dbReference type="PIR" id="B42538">
    <property type="entry name" value="VGBEKA"/>
</dbReference>
<dbReference type="GlyCosmos" id="P32514">
    <property type="glycosylation" value="5 sites, No reported glycans"/>
</dbReference>
<dbReference type="GO" id="GO:0016020">
    <property type="term" value="C:membrane"/>
    <property type="evidence" value="ECO:0007669"/>
    <property type="project" value="UniProtKB-KW"/>
</dbReference>
<dbReference type="GO" id="GO:0019031">
    <property type="term" value="C:viral envelope"/>
    <property type="evidence" value="ECO:0007669"/>
    <property type="project" value="UniProtKB-KW"/>
</dbReference>
<dbReference type="GO" id="GO:0055036">
    <property type="term" value="C:virion membrane"/>
    <property type="evidence" value="ECO:0007669"/>
    <property type="project" value="UniProtKB-SubCell"/>
</dbReference>
<dbReference type="Gene3D" id="2.70.230.10">
    <property type="match status" value="1"/>
</dbReference>
<dbReference type="InterPro" id="IPR002896">
    <property type="entry name" value="Herpes_glycop_dom"/>
</dbReference>
<dbReference type="InterPro" id="IPR036179">
    <property type="entry name" value="Ig-like_dom_sf"/>
</dbReference>
<dbReference type="Pfam" id="PF01537">
    <property type="entry name" value="Herpes_glycop_D"/>
    <property type="match status" value="1"/>
</dbReference>
<dbReference type="SUPFAM" id="SSF48726">
    <property type="entry name" value="Immunoglobulin"/>
    <property type="match status" value="1"/>
</dbReference>
<evidence type="ECO:0000250" key="1"/>
<evidence type="ECO:0000255" key="2"/>
<evidence type="ECO:0000256" key="3">
    <source>
        <dbReference type="SAM" id="MobiDB-lite"/>
    </source>
</evidence>
<evidence type="ECO:0000305" key="4"/>
<organism>
    <name type="scientific">Equine herpesvirus 1 (strain Kentucky A)</name>
    <name type="common">EHV-1</name>
    <name type="synonym">Equine abortion virus</name>
    <dbReference type="NCBI Taxonomy" id="10329"/>
    <lineage>
        <taxon>Viruses</taxon>
        <taxon>Duplodnaviria</taxon>
        <taxon>Heunggongvirae</taxon>
        <taxon>Peploviricota</taxon>
        <taxon>Herviviricetes</taxon>
        <taxon>Herpesvirales</taxon>
        <taxon>Orthoherpesviridae</taxon>
        <taxon>Alphaherpesvirinae</taxon>
        <taxon>Varicellovirus</taxon>
        <taxon>Varicellovirus equidalpha1</taxon>
        <taxon>Equid alphaherpesvirus 1</taxon>
    </lineage>
</organism>
<reference key="1">
    <citation type="journal article" date="1992" name="Virology">
        <title>Open reading frames encoding a protein kinase, homolog of glycoprotein gX of pseudorabies virus, and a novel glycoprotein map within the unique short segment of equine herpesvirus type 1.</title>
        <authorList>
            <person name="Colle C.F. III"/>
            <person name="Flowers C.C."/>
            <person name="O'Callaghan D.J."/>
        </authorList>
    </citation>
    <scope>NUCLEOTIDE SEQUENCE [GENOMIC DNA]</scope>
</reference>
<reference key="2">
    <citation type="submission" date="2001-09" db="EMBL/GenBank/DDBJ databases">
        <authorList>
            <person name="Kinkou M."/>
            <person name="Fukushi H."/>
            <person name="Matsumura T."/>
            <person name="Kim S.K."/>
            <person name="O'Callaghan D.J."/>
        </authorList>
    </citation>
    <scope>SEQUENCE REVISION TO C-TERMINUS</scope>
</reference>
<name>GG_EHV1K</name>
<feature type="signal peptide" evidence="2">
    <location>
        <begin position="1"/>
        <end position="19"/>
    </location>
</feature>
<feature type="chain" id="PRO_0000038293" description="Envelope glycoprotein G">
    <location>
        <begin position="20"/>
        <end position="411"/>
    </location>
</feature>
<feature type="transmembrane region" description="Helical" evidence="2">
    <location>
        <begin position="364"/>
        <end position="384"/>
    </location>
</feature>
<feature type="region of interest" description="Disordered" evidence="3">
    <location>
        <begin position="306"/>
        <end position="345"/>
    </location>
</feature>
<feature type="compositionally biased region" description="Polar residues" evidence="3">
    <location>
        <begin position="306"/>
        <end position="327"/>
    </location>
</feature>
<feature type="compositionally biased region" description="Polar residues" evidence="3">
    <location>
        <begin position="334"/>
        <end position="345"/>
    </location>
</feature>
<feature type="glycosylation site" description="N-linked (GlcNAc...) asparagine; by host" evidence="2">
    <location>
        <position position="83"/>
    </location>
</feature>
<feature type="glycosylation site" description="N-linked (GlcNAc...) asparagine; by host" evidence="2">
    <location>
        <position position="138"/>
    </location>
</feature>
<feature type="glycosylation site" description="N-linked (GlcNAc...) asparagine; by host" evidence="2">
    <location>
        <position position="222"/>
    </location>
</feature>
<feature type="glycosylation site" description="N-linked (GlcNAc...) asparagine; by host" evidence="2">
    <location>
        <position position="245"/>
    </location>
</feature>
<feature type="glycosylation site" description="N-linked (GlcNAc...) asparagine; by host" evidence="2">
    <location>
        <position position="317"/>
    </location>
</feature>
<organismHost>
    <name type="scientific">Equus caballus</name>
    <name type="common">Horse</name>
    <dbReference type="NCBI Taxonomy" id="9796"/>
</organismHost>
<protein>
    <recommendedName>
        <fullName>Envelope glycoprotein G</fullName>
        <shortName>gG</shortName>
    </recommendedName>
</protein>
<comment type="function">
    <text evidence="1">Chemokine-binding protein that inhibits neutrophils' chemotaxis.</text>
</comment>
<comment type="subcellular location">
    <subcellularLocation>
        <location evidence="4">Virion membrane</location>
        <topology evidence="4">Single-pass type I membrane protein</topology>
    </subcellularLocation>
</comment>
<comment type="similarity">
    <text evidence="4">Belongs to the alphaherpesvirinae glycoprotein G family.</text>
</comment>
<sequence length="411" mass="45327">MLTVLAALSLLSLLTSATGRLAPDELCYAEPRRTGSPPNTQPERPPVIFEPPTIAIKAESKGCELILLDPPIDVSYRREDKVNASIAWFFDFGACRMPIAYREYYGCIGNAVPSPETCDAYSFTLIRTEGIVEFTIVNMSLLFQPGIYDSGNFIYSVLLDYHIFTGRVTLEVEKDTNYPCGMIHGLTAYGNINVDETMDNASPHPRAVGCFPEPIDNEAWGNVTFTELGIPDPNSFLDDEGDYPNISDCHSWESYTYPNTLRQATGPQTLLVGAVGLRILAQAWKFVGDETYDTIRAEAKNLETHVPSSAAESSLENQSTQEESNSPEVAHLRSVNSDDSTHTGGASNGIQDCDSQLKTVYACLALIGLGTCAMIGLIVYICVLRSKLSSLEFWRAQNVKHRNYQRLEYVA</sequence>
<proteinExistence type="inferred from homology"/>
<accession>P32514</accession>